<proteinExistence type="inferred from homology"/>
<comment type="function">
    <text evidence="1">Required for replicative DNA synthesis. This DNA polymerase also exhibits 3' to 5' exonuclease activity.</text>
</comment>
<comment type="catalytic activity">
    <reaction evidence="1">
        <text>DNA(n) + a 2'-deoxyribonucleoside 5'-triphosphate = DNA(n+1) + diphosphate</text>
        <dbReference type="Rhea" id="RHEA:22508"/>
        <dbReference type="Rhea" id="RHEA-COMP:17339"/>
        <dbReference type="Rhea" id="RHEA-COMP:17340"/>
        <dbReference type="ChEBI" id="CHEBI:33019"/>
        <dbReference type="ChEBI" id="CHEBI:61560"/>
        <dbReference type="ChEBI" id="CHEBI:173112"/>
        <dbReference type="EC" id="2.7.7.7"/>
    </reaction>
</comment>
<comment type="subcellular location">
    <subcellularLocation>
        <location evidence="1">Cytoplasm</location>
    </subcellularLocation>
</comment>
<comment type="similarity">
    <text evidence="1">Belongs to the DNA polymerase type-C family. PolC subfamily.</text>
</comment>
<organism>
    <name type="scientific">Streptococcus pneumoniae (strain ATCC BAA-255 / R6)</name>
    <dbReference type="NCBI Taxonomy" id="171101"/>
    <lineage>
        <taxon>Bacteria</taxon>
        <taxon>Bacillati</taxon>
        <taxon>Bacillota</taxon>
        <taxon>Bacilli</taxon>
        <taxon>Lactobacillales</taxon>
        <taxon>Streptococcaceae</taxon>
        <taxon>Streptococcus</taxon>
    </lineage>
</organism>
<reference key="1">
    <citation type="journal article" date="2001" name="J. Bacteriol.">
        <title>Genome of the bacterium Streptococcus pneumoniae strain R6.</title>
        <authorList>
            <person name="Hoskins J."/>
            <person name="Alborn W.E. Jr."/>
            <person name="Arnold J."/>
            <person name="Blaszczak L.C."/>
            <person name="Burgett S."/>
            <person name="DeHoff B.S."/>
            <person name="Estrem S.T."/>
            <person name="Fritz L."/>
            <person name="Fu D.-J."/>
            <person name="Fuller W."/>
            <person name="Geringer C."/>
            <person name="Gilmour R."/>
            <person name="Glass J.S."/>
            <person name="Khoja H."/>
            <person name="Kraft A.R."/>
            <person name="Lagace R.E."/>
            <person name="LeBlanc D.J."/>
            <person name="Lee L.N."/>
            <person name="Lefkowitz E.J."/>
            <person name="Lu J."/>
            <person name="Matsushima P."/>
            <person name="McAhren S.M."/>
            <person name="McHenney M."/>
            <person name="McLeaster K."/>
            <person name="Mundy C.W."/>
            <person name="Nicas T.I."/>
            <person name="Norris F.H."/>
            <person name="O'Gara M."/>
            <person name="Peery R.B."/>
            <person name="Robertson G.T."/>
            <person name="Rockey P."/>
            <person name="Sun P.-M."/>
            <person name="Winkler M.E."/>
            <person name="Yang Y."/>
            <person name="Young-Bellido M."/>
            <person name="Zhao G."/>
            <person name="Zook C.A."/>
            <person name="Baltz R.H."/>
            <person name="Jaskunas S.R."/>
            <person name="Rosteck P.R. Jr."/>
            <person name="Skatrud P.L."/>
            <person name="Glass J.I."/>
        </authorList>
    </citation>
    <scope>NUCLEOTIDE SEQUENCE [LARGE SCALE GENOMIC DNA]</scope>
    <source>
        <strain>ATCC BAA-255 / R6</strain>
    </source>
</reference>
<name>DPO3_STRR6</name>
<gene>
    <name evidence="1" type="primary">polC</name>
    <name type="ordered locus">spr0251</name>
</gene>
<dbReference type="EC" id="2.7.7.7" evidence="1"/>
<dbReference type="EMBL" id="AE007317">
    <property type="protein sequence ID" value="AAK99055.1"/>
    <property type="molecule type" value="Genomic_DNA"/>
</dbReference>
<dbReference type="PIR" id="C97903">
    <property type="entry name" value="C97903"/>
</dbReference>
<dbReference type="RefSeq" id="NP_357845.1">
    <property type="nucleotide sequence ID" value="NC_003098.1"/>
</dbReference>
<dbReference type="RefSeq" id="WP_000071396.1">
    <property type="nucleotide sequence ID" value="NC_003098.1"/>
</dbReference>
<dbReference type="SMR" id="Q8DRA5"/>
<dbReference type="STRING" id="171101.spr0251"/>
<dbReference type="KEGG" id="spr:spr0251"/>
<dbReference type="PATRIC" id="fig|171101.6.peg.286"/>
<dbReference type="eggNOG" id="COG2176">
    <property type="taxonomic scope" value="Bacteria"/>
</dbReference>
<dbReference type="HOGENOM" id="CLU_003297_2_0_9"/>
<dbReference type="Proteomes" id="UP000000586">
    <property type="component" value="Chromosome"/>
</dbReference>
<dbReference type="GO" id="GO:0005737">
    <property type="term" value="C:cytoplasm"/>
    <property type="evidence" value="ECO:0007669"/>
    <property type="project" value="UniProtKB-SubCell"/>
</dbReference>
<dbReference type="GO" id="GO:0008408">
    <property type="term" value="F:3'-5' exonuclease activity"/>
    <property type="evidence" value="ECO:0007669"/>
    <property type="project" value="UniProtKB-UniRule"/>
</dbReference>
<dbReference type="GO" id="GO:0003677">
    <property type="term" value="F:DNA binding"/>
    <property type="evidence" value="ECO:0007669"/>
    <property type="project" value="UniProtKB-UniRule"/>
</dbReference>
<dbReference type="GO" id="GO:0003887">
    <property type="term" value="F:DNA-directed DNA polymerase activity"/>
    <property type="evidence" value="ECO:0000318"/>
    <property type="project" value="GO_Central"/>
</dbReference>
<dbReference type="GO" id="GO:0006261">
    <property type="term" value="P:DNA-templated DNA replication"/>
    <property type="evidence" value="ECO:0007669"/>
    <property type="project" value="UniProtKB-UniRule"/>
</dbReference>
<dbReference type="CDD" id="cd06127">
    <property type="entry name" value="DEDDh"/>
    <property type="match status" value="1"/>
</dbReference>
<dbReference type="CDD" id="cd07435">
    <property type="entry name" value="PHP_PolIIIA_POLC"/>
    <property type="match status" value="1"/>
</dbReference>
<dbReference type="CDD" id="cd04484">
    <property type="entry name" value="polC_OBF"/>
    <property type="match status" value="1"/>
</dbReference>
<dbReference type="FunFam" id="3.30.420.10:FF:000045">
    <property type="entry name" value="3'-5' exonuclease DinG"/>
    <property type="match status" value="1"/>
</dbReference>
<dbReference type="Gene3D" id="1.10.150.870">
    <property type="match status" value="1"/>
</dbReference>
<dbReference type="Gene3D" id="3.30.1900.20">
    <property type="match status" value="1"/>
</dbReference>
<dbReference type="Gene3D" id="6.10.140.1510">
    <property type="match status" value="1"/>
</dbReference>
<dbReference type="Gene3D" id="3.20.20.140">
    <property type="entry name" value="Metal-dependent hydrolases"/>
    <property type="match status" value="1"/>
</dbReference>
<dbReference type="Gene3D" id="2.40.50.140">
    <property type="entry name" value="Nucleic acid-binding proteins"/>
    <property type="match status" value="1"/>
</dbReference>
<dbReference type="Gene3D" id="1.10.150.700">
    <property type="entry name" value="PolC, middle finger domain"/>
    <property type="match status" value="1"/>
</dbReference>
<dbReference type="Gene3D" id="3.30.420.10">
    <property type="entry name" value="Ribonuclease H-like superfamily/Ribonuclease H"/>
    <property type="match status" value="1"/>
</dbReference>
<dbReference type="HAMAP" id="MF_00356">
    <property type="entry name" value="DNApol_PolC"/>
    <property type="match status" value="1"/>
</dbReference>
<dbReference type="InterPro" id="IPR011708">
    <property type="entry name" value="DNA_pol3_alpha_NTPase_dom"/>
</dbReference>
<dbReference type="InterPro" id="IPR040982">
    <property type="entry name" value="DNA_pol3_finger"/>
</dbReference>
<dbReference type="InterPro" id="IPR024754">
    <property type="entry name" value="DNA_PolC-like_N_II"/>
</dbReference>
<dbReference type="InterPro" id="IPR028112">
    <property type="entry name" value="DNA_PolC-type_N_I"/>
</dbReference>
<dbReference type="InterPro" id="IPR004805">
    <property type="entry name" value="DnaE2/DnaE/PolC"/>
</dbReference>
<dbReference type="InterPro" id="IPR029460">
    <property type="entry name" value="DNAPol_HHH"/>
</dbReference>
<dbReference type="InterPro" id="IPR006054">
    <property type="entry name" value="DnaQ"/>
</dbReference>
<dbReference type="InterPro" id="IPR013520">
    <property type="entry name" value="Exonuclease_RNaseT/DNA_pol3"/>
</dbReference>
<dbReference type="InterPro" id="IPR012340">
    <property type="entry name" value="NA-bd_OB-fold"/>
</dbReference>
<dbReference type="InterPro" id="IPR004013">
    <property type="entry name" value="PHP_dom"/>
</dbReference>
<dbReference type="InterPro" id="IPR003141">
    <property type="entry name" value="Pol/His_phosphatase_N"/>
</dbReference>
<dbReference type="InterPro" id="IPR016195">
    <property type="entry name" value="Pol/histidinol_Pase-like"/>
</dbReference>
<dbReference type="InterPro" id="IPR006308">
    <property type="entry name" value="Pol_III_a_PolC-type_gram_pos"/>
</dbReference>
<dbReference type="InterPro" id="IPR044923">
    <property type="entry name" value="PolC_middle_finger_sf"/>
</dbReference>
<dbReference type="InterPro" id="IPR012337">
    <property type="entry name" value="RNaseH-like_sf"/>
</dbReference>
<dbReference type="InterPro" id="IPR036397">
    <property type="entry name" value="RNaseH_sf"/>
</dbReference>
<dbReference type="NCBIfam" id="TIGR00573">
    <property type="entry name" value="dnaq"/>
    <property type="match status" value="1"/>
</dbReference>
<dbReference type="NCBIfam" id="TIGR01405">
    <property type="entry name" value="polC_Gram_pos"/>
    <property type="match status" value="1"/>
</dbReference>
<dbReference type="NCBIfam" id="NF001688">
    <property type="entry name" value="PRK00448.1"/>
    <property type="match status" value="1"/>
</dbReference>
<dbReference type="PANTHER" id="PTHR32294:SF5">
    <property type="entry name" value="DNA POLYMERASE III POLC-TYPE"/>
    <property type="match status" value="1"/>
</dbReference>
<dbReference type="PANTHER" id="PTHR32294">
    <property type="entry name" value="DNA POLYMERASE III SUBUNIT ALPHA"/>
    <property type="match status" value="1"/>
</dbReference>
<dbReference type="Pfam" id="PF14480">
    <property type="entry name" value="DNA_pol3_a_NI"/>
    <property type="match status" value="1"/>
</dbReference>
<dbReference type="Pfam" id="PF11490">
    <property type="entry name" value="DNA_pol3_a_NII"/>
    <property type="match status" value="1"/>
</dbReference>
<dbReference type="Pfam" id="PF07733">
    <property type="entry name" value="DNA_pol3_alpha"/>
    <property type="match status" value="2"/>
</dbReference>
<dbReference type="Pfam" id="PF17657">
    <property type="entry name" value="DNA_pol3_finger"/>
    <property type="match status" value="1"/>
</dbReference>
<dbReference type="Pfam" id="PF14579">
    <property type="entry name" value="HHH_6"/>
    <property type="match status" value="1"/>
</dbReference>
<dbReference type="Pfam" id="PF02811">
    <property type="entry name" value="PHP"/>
    <property type="match status" value="1"/>
</dbReference>
<dbReference type="Pfam" id="PF00929">
    <property type="entry name" value="RNase_T"/>
    <property type="match status" value="1"/>
</dbReference>
<dbReference type="SMART" id="SM00479">
    <property type="entry name" value="EXOIII"/>
    <property type="match status" value="1"/>
</dbReference>
<dbReference type="SMART" id="SM00481">
    <property type="entry name" value="POLIIIAc"/>
    <property type="match status" value="1"/>
</dbReference>
<dbReference type="SUPFAM" id="SSF50249">
    <property type="entry name" value="Nucleic acid-binding proteins"/>
    <property type="match status" value="1"/>
</dbReference>
<dbReference type="SUPFAM" id="SSF89550">
    <property type="entry name" value="PHP domain-like"/>
    <property type="match status" value="1"/>
</dbReference>
<dbReference type="SUPFAM" id="SSF53098">
    <property type="entry name" value="Ribonuclease H-like"/>
    <property type="match status" value="1"/>
</dbReference>
<protein>
    <recommendedName>
        <fullName evidence="1">DNA polymerase III PolC-type</fullName>
        <shortName evidence="1">PolIII</shortName>
        <ecNumber evidence="1">2.7.7.7</ecNumber>
    </recommendedName>
</protein>
<keyword id="KW-0963">Cytoplasm</keyword>
<keyword id="KW-0235">DNA replication</keyword>
<keyword id="KW-0239">DNA-directed DNA polymerase</keyword>
<keyword id="KW-0269">Exonuclease</keyword>
<keyword id="KW-0378">Hydrolase</keyword>
<keyword id="KW-0540">Nuclease</keyword>
<keyword id="KW-0548">Nucleotidyltransferase</keyword>
<keyword id="KW-1185">Reference proteome</keyword>
<keyword id="KW-0808">Transferase</keyword>
<sequence>MSNSFEILMNQLGMPAEMRQAPALAQANIERVVVHKISKVWEFHFVFSNILPIEIFLELKKGLSEEFSKTGNKAVFEIKARSQEFSNQLLQSYYREAFSEGPCASQGFKSLYQNLQVRAEGNQLFIEGSEAIDKEHFKKNHLPNLAKQLEKFGFPTFNCQVEKNDVLTQEQEEAFHAENEQIVQAANEEALRAMEQLEQMAPPPAEEKPVFDFQAKKAAAKPKLDKAEITPMIEVTTEENRLVFEGVVFDVEQKVTRTGRVLINFKMTDYTSSFSMQKWVKNEEEAQKFDLIKKNSWLRVRGNVEMNNFTRDLTMNVQDLQEVVHYERKDLMPEGERRVEFHAHTNMSTMDALPEVEEIVATAAKWGHKAVAITDHGNVQSFPHGYKAAKKAGIQLIYGIEANIVEDRVPIVYNEVEMDLSEATYVVFDVETTGLSAIYNDLIQVAASKMYKGNVIAEFDEFINPGHPLSAFTTELTGITDDHVKNAKPLEQVLQEFQEFCKDTVLVAHNATFDVGFMNANYERHDLPKISQPVIDTLEFARNLYPEYKRHGLGPLTKRFGVALEHHHMANYDAEATGRLLFIFIKEVAEKHGVTDLARLNIDLISPDSYKKARIKHATIYVKNQVGLKNIFKLVSLSNTKYFEGVSRIPRTVLDAHREGLILGSACSEGEVFDVVVSQGVDAAVEVAKYYDFIEVMPPAIYAPLIAKEQVKDMEELQTIIKSLIEVGDRLGKPVLATGNVHYIEPEEEIYREIIVRSLGQGAMINRTIGHGEHAQPAPLPKAHFRTTNEMLDEFAFLGEELARKLVIENTNALAEIFEPVEVVKGDLYTPFIDKAEETVAELTYKKAFEIYGNPLPDIVDLRIEKELTSILGNGFAVIYLASQMLVQRSNERGYLVGSRGSVGSSFVATMIGITEVNPLSPHYVCGQCQYSEFITDGSYGSGFDMPHKDCPNCGHKLSKNGQDIPFETFLGFDGDKVPDIDLNFSGEDQPSAHLDVRDIFGEEYAFRAGTVGTVAAKTAYGFVKGYERDYGKFYRDAEVERLAQGAAGVKRTTGQHPGGIVVIPNYMDVYDFTPVQYPADDVTAEWQTTHFNFHDIDENVLKLDVLGHDDPTMIRKLQDLSGIDPNKIPMDDEGVMALFSGTDVLGVTPEQIGTPTGMLGIPEFGTNFVRGMVDETHPTTFAELLQLSGLSHGTDVWLGNAQDLIKQGIADLSTVIGCRDDIMVYLMHAGLEPKMAFTIMERVRKGLWLKISEEERNGYIEAMKANKVPEWYIESCGKIKYMFPKAHAAAYVMMALRVAYFKVHHPIYYYCAYFSIRAKAFDIKTMGAGLEAIKRRMEEISEKRKNNEASNVEIDLYTTLEIVNEMWERGFKFGKLDLYRSQATEFLIDGDTLIPPFVAMDGLGENVAKQLVRAREEGEFLSKTELRKRGGLSSTLVEKMDEMGILGNMPEDNQLSLFDELF</sequence>
<accession>Q8DRA5</accession>
<feature type="chain" id="PRO_0000204599" description="DNA polymerase III PolC-type">
    <location>
        <begin position="1"/>
        <end position="1463"/>
    </location>
</feature>
<feature type="domain" description="Exonuclease">
    <location>
        <begin position="425"/>
        <end position="581"/>
    </location>
</feature>
<evidence type="ECO:0000255" key="1">
    <source>
        <dbReference type="HAMAP-Rule" id="MF_00356"/>
    </source>
</evidence>